<protein>
    <recommendedName>
        <fullName evidence="1">Beta-ketoacyl-[acyl-carrier-protein] synthase III</fullName>
        <shortName evidence="1">Beta-ketoacyl-ACP synthase III</shortName>
        <shortName evidence="1">KAS III</shortName>
        <ecNumber evidence="1">2.3.1.180</ecNumber>
    </recommendedName>
    <alternativeName>
        <fullName evidence="1">3-oxoacyl-[acyl-carrier-protein] synthase 3</fullName>
    </alternativeName>
    <alternativeName>
        <fullName evidence="1">3-oxoacyl-[acyl-carrier-protein] synthase III</fullName>
    </alternativeName>
</protein>
<evidence type="ECO:0000255" key="1">
    <source>
        <dbReference type="HAMAP-Rule" id="MF_01815"/>
    </source>
</evidence>
<reference key="1">
    <citation type="journal article" date="2003" name="Genome Res.">
        <title>Genome sequence of an M3 strain of Streptococcus pyogenes reveals a large-scale genomic rearrangement in invasive strains and new insights into phage evolution.</title>
        <authorList>
            <person name="Nakagawa I."/>
            <person name="Kurokawa K."/>
            <person name="Yamashita A."/>
            <person name="Nakata M."/>
            <person name="Tomiyasu Y."/>
            <person name="Okahashi N."/>
            <person name="Kawabata S."/>
            <person name="Yamazaki K."/>
            <person name="Shiba T."/>
            <person name="Yasunaga T."/>
            <person name="Hayashi H."/>
            <person name="Hattori M."/>
            <person name="Hamada S."/>
        </authorList>
    </citation>
    <scope>NUCLEOTIDE SEQUENCE [LARGE SCALE GENOMIC DNA]</scope>
    <source>
        <strain>SSI-1</strain>
    </source>
</reference>
<keyword id="KW-0012">Acyltransferase</keyword>
<keyword id="KW-0963">Cytoplasm</keyword>
<keyword id="KW-0275">Fatty acid biosynthesis</keyword>
<keyword id="KW-0276">Fatty acid metabolism</keyword>
<keyword id="KW-0444">Lipid biosynthesis</keyword>
<keyword id="KW-0443">Lipid metabolism</keyword>
<keyword id="KW-0511">Multifunctional enzyme</keyword>
<keyword id="KW-0808">Transferase</keyword>
<accession>P0DB01</accession>
<accession>P64114</accession>
<accession>Q8NZN0</accession>
<sequence>MIFSKISQVAHYVPQQLVTNNDLASIMDTSHEWIFSRTGIAERHISRDEMTSDLAIQVADQLLTQSGLKADAIDFIIVATISPDATMPSTAAKVQAAIAATSAFAFDMTAACSGFVFALAMADKLIASGAYQNGMVIGAETLSKLVNWQDRATAVLFGDGAGGVLLEASKDKHVLAETLHTDGARCQSLISGETSLSSPYSIGKKAIATIQMDGRAIFDFAIRDVSKSILTLMAQSDITKDDIDYCLLHQANRRILDKIARKIDVPREKFLENMMRYGNTSAASIPILLSEAVQKGQIRLDGTQKILLSGFGGGLTWGSLIVKI</sequence>
<name>FABH_STRPQ</name>
<dbReference type="EC" id="2.3.1.180" evidence="1"/>
<dbReference type="EMBL" id="BA000034">
    <property type="protein sequence ID" value="BAC63434.1"/>
    <property type="molecule type" value="Genomic_DNA"/>
</dbReference>
<dbReference type="RefSeq" id="WP_002988609.1">
    <property type="nucleotide sequence ID" value="NC_004606.1"/>
</dbReference>
<dbReference type="SMR" id="P0DB01"/>
<dbReference type="KEGG" id="sps:SPs0339"/>
<dbReference type="HOGENOM" id="CLU_039592_4_1_9"/>
<dbReference type="UniPathway" id="UPA00094"/>
<dbReference type="GO" id="GO:0005737">
    <property type="term" value="C:cytoplasm"/>
    <property type="evidence" value="ECO:0007669"/>
    <property type="project" value="UniProtKB-SubCell"/>
</dbReference>
<dbReference type="GO" id="GO:0004315">
    <property type="term" value="F:3-oxoacyl-[acyl-carrier-protein] synthase activity"/>
    <property type="evidence" value="ECO:0007669"/>
    <property type="project" value="InterPro"/>
</dbReference>
<dbReference type="GO" id="GO:0033818">
    <property type="term" value="F:beta-ketoacyl-acyl-carrier-protein synthase III activity"/>
    <property type="evidence" value="ECO:0007669"/>
    <property type="project" value="UniProtKB-UniRule"/>
</dbReference>
<dbReference type="GO" id="GO:0006633">
    <property type="term" value="P:fatty acid biosynthetic process"/>
    <property type="evidence" value="ECO:0007669"/>
    <property type="project" value="UniProtKB-UniRule"/>
</dbReference>
<dbReference type="CDD" id="cd00830">
    <property type="entry name" value="KAS_III"/>
    <property type="match status" value="1"/>
</dbReference>
<dbReference type="Gene3D" id="3.40.47.10">
    <property type="match status" value="1"/>
</dbReference>
<dbReference type="HAMAP" id="MF_01815">
    <property type="entry name" value="FabH"/>
    <property type="match status" value="1"/>
</dbReference>
<dbReference type="InterPro" id="IPR013747">
    <property type="entry name" value="ACP_syn_III_C"/>
</dbReference>
<dbReference type="InterPro" id="IPR013751">
    <property type="entry name" value="ACP_syn_III_N"/>
</dbReference>
<dbReference type="InterPro" id="IPR004655">
    <property type="entry name" value="FabH"/>
</dbReference>
<dbReference type="InterPro" id="IPR016039">
    <property type="entry name" value="Thiolase-like"/>
</dbReference>
<dbReference type="NCBIfam" id="TIGR00747">
    <property type="entry name" value="fabH"/>
    <property type="match status" value="1"/>
</dbReference>
<dbReference type="NCBIfam" id="NF006829">
    <property type="entry name" value="PRK09352.1"/>
    <property type="match status" value="1"/>
</dbReference>
<dbReference type="PANTHER" id="PTHR43091">
    <property type="entry name" value="3-OXOACYL-[ACYL-CARRIER-PROTEIN] SYNTHASE"/>
    <property type="match status" value="1"/>
</dbReference>
<dbReference type="PANTHER" id="PTHR43091:SF1">
    <property type="entry name" value="BETA-KETOACYL-[ACYL-CARRIER-PROTEIN] SYNTHASE III, CHLOROPLASTIC"/>
    <property type="match status" value="1"/>
</dbReference>
<dbReference type="Pfam" id="PF08545">
    <property type="entry name" value="ACP_syn_III"/>
    <property type="match status" value="1"/>
</dbReference>
<dbReference type="Pfam" id="PF08541">
    <property type="entry name" value="ACP_syn_III_C"/>
    <property type="match status" value="1"/>
</dbReference>
<dbReference type="SUPFAM" id="SSF53901">
    <property type="entry name" value="Thiolase-like"/>
    <property type="match status" value="1"/>
</dbReference>
<organism>
    <name type="scientific">Streptococcus pyogenes serotype M3 (strain SSI-1)</name>
    <dbReference type="NCBI Taxonomy" id="193567"/>
    <lineage>
        <taxon>Bacteria</taxon>
        <taxon>Bacillati</taxon>
        <taxon>Bacillota</taxon>
        <taxon>Bacilli</taxon>
        <taxon>Lactobacillales</taxon>
        <taxon>Streptococcaceae</taxon>
        <taxon>Streptococcus</taxon>
    </lineage>
</organism>
<gene>
    <name evidence="1" type="primary">fabH</name>
    <name type="ordered locus">SPs0339</name>
</gene>
<proteinExistence type="inferred from homology"/>
<feature type="chain" id="PRO_0000411338" description="Beta-ketoacyl-[acyl-carrier-protein] synthase III">
    <location>
        <begin position="1"/>
        <end position="324"/>
    </location>
</feature>
<feature type="region of interest" description="ACP-binding" evidence="1">
    <location>
        <begin position="250"/>
        <end position="254"/>
    </location>
</feature>
<feature type="active site" evidence="1">
    <location>
        <position position="112"/>
    </location>
</feature>
<feature type="active site" evidence="1">
    <location>
        <position position="249"/>
    </location>
</feature>
<feature type="active site" evidence="1">
    <location>
        <position position="279"/>
    </location>
</feature>
<comment type="function">
    <text evidence="1">Catalyzes the condensation reaction of fatty acid synthesis by the addition to an acyl acceptor of two carbons from malonyl-ACP. Catalyzes the first condensation reaction which initiates fatty acid synthesis and may therefore play a role in governing the total rate of fatty acid production. Possesses both acetoacetyl-ACP synthase and acetyl transacylase activities. Its substrate specificity determines the biosynthesis of branched-chain and/or straight-chain of fatty acids.</text>
</comment>
<comment type="catalytic activity">
    <reaction evidence="1">
        <text>malonyl-[ACP] + acetyl-CoA + H(+) = 3-oxobutanoyl-[ACP] + CO2 + CoA</text>
        <dbReference type="Rhea" id="RHEA:12080"/>
        <dbReference type="Rhea" id="RHEA-COMP:9623"/>
        <dbReference type="Rhea" id="RHEA-COMP:9625"/>
        <dbReference type="ChEBI" id="CHEBI:15378"/>
        <dbReference type="ChEBI" id="CHEBI:16526"/>
        <dbReference type="ChEBI" id="CHEBI:57287"/>
        <dbReference type="ChEBI" id="CHEBI:57288"/>
        <dbReference type="ChEBI" id="CHEBI:78449"/>
        <dbReference type="ChEBI" id="CHEBI:78450"/>
        <dbReference type="EC" id="2.3.1.180"/>
    </reaction>
</comment>
<comment type="pathway">
    <text evidence="1">Lipid metabolism; fatty acid biosynthesis.</text>
</comment>
<comment type="subunit">
    <text evidence="1">Homodimer.</text>
</comment>
<comment type="subcellular location">
    <subcellularLocation>
        <location evidence="1">Cytoplasm</location>
    </subcellularLocation>
</comment>
<comment type="domain">
    <text evidence="1">The last Arg residue of the ACP-binding site is essential for the weak association between ACP/AcpP and FabH.</text>
</comment>
<comment type="similarity">
    <text evidence="1">Belongs to the thiolase-like superfamily. FabH family.</text>
</comment>